<gene>
    <name evidence="1" type="primary">tgt</name>
    <name type="ordered locus">FN1481</name>
</gene>
<comment type="function">
    <text evidence="1">Catalyzes the base-exchange of a guanine (G) residue with the queuine precursor 7-aminomethyl-7-deazaguanine (PreQ1) at position 34 (anticodon wobble position) in tRNAs with GU(N) anticodons (tRNA-Asp, -Asn, -His and -Tyr). Catalysis occurs through a double-displacement mechanism. The nucleophile active site attacks the C1' of nucleotide 34 to detach the guanine base from the RNA, forming a covalent enzyme-RNA intermediate. The proton acceptor active site deprotonates the incoming PreQ1, allowing a nucleophilic attack on the C1' of the ribose to form the product. After dissociation, two additional enzymatic reactions on the tRNA convert PreQ1 to queuine (Q), resulting in the hypermodified nucleoside queuosine (7-(((4,5-cis-dihydroxy-2-cyclopenten-1-yl)amino)methyl)-7-deazaguanosine).</text>
</comment>
<comment type="catalytic activity">
    <reaction evidence="1">
        <text>7-aminomethyl-7-carbaguanine + guanosine(34) in tRNA = 7-aminomethyl-7-carbaguanosine(34) in tRNA + guanine</text>
        <dbReference type="Rhea" id="RHEA:24104"/>
        <dbReference type="Rhea" id="RHEA-COMP:10341"/>
        <dbReference type="Rhea" id="RHEA-COMP:10342"/>
        <dbReference type="ChEBI" id="CHEBI:16235"/>
        <dbReference type="ChEBI" id="CHEBI:58703"/>
        <dbReference type="ChEBI" id="CHEBI:74269"/>
        <dbReference type="ChEBI" id="CHEBI:82833"/>
        <dbReference type="EC" id="2.4.2.29"/>
    </reaction>
</comment>
<comment type="cofactor">
    <cofactor evidence="1">
        <name>Zn(2+)</name>
        <dbReference type="ChEBI" id="CHEBI:29105"/>
    </cofactor>
    <text evidence="1">Binds 1 zinc ion per subunit.</text>
</comment>
<comment type="pathway">
    <text evidence="1">tRNA modification; tRNA-queuosine biosynthesis.</text>
</comment>
<comment type="subunit">
    <text evidence="1">Homodimer. Within each dimer, one monomer is responsible for RNA recognition and catalysis, while the other monomer binds to the replacement base PreQ1.</text>
</comment>
<comment type="similarity">
    <text evidence="1">Belongs to the queuine tRNA-ribosyltransferase family.</text>
</comment>
<keyword id="KW-0328">Glycosyltransferase</keyword>
<keyword id="KW-0479">Metal-binding</keyword>
<keyword id="KW-0671">Queuosine biosynthesis</keyword>
<keyword id="KW-1185">Reference proteome</keyword>
<keyword id="KW-0808">Transferase</keyword>
<keyword id="KW-0819">tRNA processing</keyword>
<keyword id="KW-0862">Zinc</keyword>
<organism>
    <name type="scientific">Fusobacterium nucleatum subsp. nucleatum (strain ATCC 25586 / DSM 15643 / BCRC 10681 / CIP 101130 / JCM 8532 / KCTC 2640 / LMG 13131 / VPI 4355)</name>
    <dbReference type="NCBI Taxonomy" id="190304"/>
    <lineage>
        <taxon>Bacteria</taxon>
        <taxon>Fusobacteriati</taxon>
        <taxon>Fusobacteriota</taxon>
        <taxon>Fusobacteriia</taxon>
        <taxon>Fusobacteriales</taxon>
        <taxon>Fusobacteriaceae</taxon>
        <taxon>Fusobacterium</taxon>
    </lineage>
</organism>
<sequence length="373" mass="42800">MKLPVTYKVEDKDGKARAGVITTLHGEIETPVFMPVGTQATVKTMSKEELLDIGSEIILGNTYHLYLRPNDELIARLGGLHKFMNWDRPILTDSGGFQVFSLGSLRKIKEEGVYFSSHIDGSKHFISPEKSIQIQNNLGSDIVMLFDECPPGLSTREYIIPSIERTTRWAKRCVEAHQKKDIQGLFAIVQGGIYEDLRQKSLDELSEMDENFSGYAIGGLAVGEPREDMYRILDYIVEKCPEEKPRYLMGVGEPVDMLNAVESGIDMMDCVQPTRLARHGTVFTKDGRLVIKSERYKEDTKPLDEECDCYVCKNYSRAYIRHLIKVQEVLGLRLTSYHNLYFLIKLMKDAREAIKEKRFKEFKEKFIQRYEGK</sequence>
<evidence type="ECO:0000255" key="1">
    <source>
        <dbReference type="HAMAP-Rule" id="MF_00168"/>
    </source>
</evidence>
<dbReference type="EC" id="2.4.2.29" evidence="1"/>
<dbReference type="EMBL" id="AE009951">
    <property type="protein sequence ID" value="AAL95674.1"/>
    <property type="molecule type" value="Genomic_DNA"/>
</dbReference>
<dbReference type="RefSeq" id="NP_604375.1">
    <property type="nucleotide sequence ID" value="NC_003454.1"/>
</dbReference>
<dbReference type="RefSeq" id="WP_005902330.1">
    <property type="nucleotide sequence ID" value="NZ_OZ209243.1"/>
</dbReference>
<dbReference type="SMR" id="Q8RDN0"/>
<dbReference type="FunCoup" id="Q8RDN0">
    <property type="interactions" value="375"/>
</dbReference>
<dbReference type="STRING" id="190304.FN1481"/>
<dbReference type="PaxDb" id="190304-FN1481"/>
<dbReference type="EnsemblBacteria" id="AAL95674">
    <property type="protein sequence ID" value="AAL95674"/>
    <property type="gene ID" value="FN1481"/>
</dbReference>
<dbReference type="GeneID" id="79784444"/>
<dbReference type="KEGG" id="fnu:FN1481"/>
<dbReference type="PATRIC" id="fig|190304.8.peg.2041"/>
<dbReference type="eggNOG" id="COG0343">
    <property type="taxonomic scope" value="Bacteria"/>
</dbReference>
<dbReference type="HOGENOM" id="CLU_022060_0_1_0"/>
<dbReference type="InParanoid" id="Q8RDN0"/>
<dbReference type="BioCyc" id="FNUC190304:G1FZS-2049-MONOMER"/>
<dbReference type="UniPathway" id="UPA00392"/>
<dbReference type="Proteomes" id="UP000002521">
    <property type="component" value="Chromosome"/>
</dbReference>
<dbReference type="GO" id="GO:0005737">
    <property type="term" value="C:cytoplasm"/>
    <property type="evidence" value="ECO:0000318"/>
    <property type="project" value="GO_Central"/>
</dbReference>
<dbReference type="GO" id="GO:0005829">
    <property type="term" value="C:cytosol"/>
    <property type="evidence" value="ECO:0000318"/>
    <property type="project" value="GO_Central"/>
</dbReference>
<dbReference type="GO" id="GO:0046872">
    <property type="term" value="F:metal ion binding"/>
    <property type="evidence" value="ECO:0007669"/>
    <property type="project" value="UniProtKB-KW"/>
</dbReference>
<dbReference type="GO" id="GO:0008479">
    <property type="term" value="F:tRNA-guanosine(34) queuine transglycosylase activity"/>
    <property type="evidence" value="ECO:0007669"/>
    <property type="project" value="UniProtKB-UniRule"/>
</dbReference>
<dbReference type="GO" id="GO:0008616">
    <property type="term" value="P:queuosine biosynthetic process"/>
    <property type="evidence" value="ECO:0000318"/>
    <property type="project" value="GO_Central"/>
</dbReference>
<dbReference type="GO" id="GO:0002099">
    <property type="term" value="P:tRNA wobble guanine modification"/>
    <property type="evidence" value="ECO:0000318"/>
    <property type="project" value="GO_Central"/>
</dbReference>
<dbReference type="GO" id="GO:0101030">
    <property type="term" value="P:tRNA-guanine transglycosylation"/>
    <property type="evidence" value="ECO:0007669"/>
    <property type="project" value="InterPro"/>
</dbReference>
<dbReference type="FunFam" id="3.20.20.105:FF:000001">
    <property type="entry name" value="Queuine tRNA-ribosyltransferase"/>
    <property type="match status" value="1"/>
</dbReference>
<dbReference type="Gene3D" id="3.20.20.105">
    <property type="entry name" value="Queuine tRNA-ribosyltransferase-like"/>
    <property type="match status" value="1"/>
</dbReference>
<dbReference type="HAMAP" id="MF_00168">
    <property type="entry name" value="Q_tRNA_Tgt"/>
    <property type="match status" value="1"/>
</dbReference>
<dbReference type="InterPro" id="IPR050076">
    <property type="entry name" value="ArchSynthase1/Queuine_TRR"/>
</dbReference>
<dbReference type="InterPro" id="IPR004803">
    <property type="entry name" value="TGT"/>
</dbReference>
<dbReference type="InterPro" id="IPR036511">
    <property type="entry name" value="TGT-like_sf"/>
</dbReference>
<dbReference type="InterPro" id="IPR002616">
    <property type="entry name" value="tRNA_ribo_trans-like"/>
</dbReference>
<dbReference type="NCBIfam" id="TIGR00430">
    <property type="entry name" value="Q_tRNA_tgt"/>
    <property type="match status" value="1"/>
</dbReference>
<dbReference type="NCBIfam" id="TIGR00449">
    <property type="entry name" value="tgt_general"/>
    <property type="match status" value="1"/>
</dbReference>
<dbReference type="PANTHER" id="PTHR46499">
    <property type="entry name" value="QUEUINE TRNA-RIBOSYLTRANSFERASE"/>
    <property type="match status" value="1"/>
</dbReference>
<dbReference type="PANTHER" id="PTHR46499:SF1">
    <property type="entry name" value="QUEUINE TRNA-RIBOSYLTRANSFERASE"/>
    <property type="match status" value="1"/>
</dbReference>
<dbReference type="Pfam" id="PF01702">
    <property type="entry name" value="TGT"/>
    <property type="match status" value="1"/>
</dbReference>
<dbReference type="SUPFAM" id="SSF51713">
    <property type="entry name" value="tRNA-guanine transglycosylase"/>
    <property type="match status" value="1"/>
</dbReference>
<accession>Q8RDN0</accession>
<proteinExistence type="inferred from homology"/>
<reference key="1">
    <citation type="journal article" date="2002" name="J. Bacteriol.">
        <title>Genome sequence and analysis of the oral bacterium Fusobacterium nucleatum strain ATCC 25586.</title>
        <authorList>
            <person name="Kapatral V."/>
            <person name="Anderson I."/>
            <person name="Ivanova N."/>
            <person name="Reznik G."/>
            <person name="Los T."/>
            <person name="Lykidis A."/>
            <person name="Bhattacharyya A."/>
            <person name="Bartman A."/>
            <person name="Gardner W."/>
            <person name="Grechkin G."/>
            <person name="Zhu L."/>
            <person name="Vasieva O."/>
            <person name="Chu L."/>
            <person name="Kogan Y."/>
            <person name="Chaga O."/>
            <person name="Goltsman E."/>
            <person name="Bernal A."/>
            <person name="Larsen N."/>
            <person name="D'Souza M."/>
            <person name="Walunas T."/>
            <person name="Pusch G."/>
            <person name="Haselkorn R."/>
            <person name="Fonstein M."/>
            <person name="Kyrpides N.C."/>
            <person name="Overbeek R."/>
        </authorList>
    </citation>
    <scope>NUCLEOTIDE SEQUENCE [LARGE SCALE GENOMIC DNA]</scope>
    <source>
        <strain>ATCC 25586 / DSM 15643 / BCRC 10681 / CIP 101130 / JCM 8532 / KCTC 2640 / LMG 13131 / VPI 4355</strain>
    </source>
</reference>
<feature type="chain" id="PRO_0000135477" description="Queuine tRNA-ribosyltransferase">
    <location>
        <begin position="1"/>
        <end position="373"/>
    </location>
</feature>
<feature type="region of interest" description="RNA binding" evidence="1">
    <location>
        <begin position="250"/>
        <end position="256"/>
    </location>
</feature>
<feature type="region of interest" description="RNA binding; important for wobble base 34 recognition" evidence="1">
    <location>
        <begin position="274"/>
        <end position="278"/>
    </location>
</feature>
<feature type="active site" description="Proton acceptor" evidence="1">
    <location>
        <position position="93"/>
    </location>
</feature>
<feature type="active site" description="Nucleophile" evidence="1">
    <location>
        <position position="269"/>
    </location>
</feature>
<feature type="binding site" evidence="1">
    <location>
        <begin position="93"/>
        <end position="97"/>
    </location>
    <ligand>
        <name>substrate</name>
    </ligand>
</feature>
<feature type="binding site" evidence="1">
    <location>
        <position position="147"/>
    </location>
    <ligand>
        <name>substrate</name>
    </ligand>
</feature>
<feature type="binding site" evidence="1">
    <location>
        <position position="190"/>
    </location>
    <ligand>
        <name>substrate</name>
    </ligand>
</feature>
<feature type="binding site" evidence="1">
    <location>
        <position position="219"/>
    </location>
    <ligand>
        <name>substrate</name>
    </ligand>
</feature>
<feature type="binding site" evidence="1">
    <location>
        <position position="307"/>
    </location>
    <ligand>
        <name>Zn(2+)</name>
        <dbReference type="ChEBI" id="CHEBI:29105"/>
    </ligand>
</feature>
<feature type="binding site" evidence="1">
    <location>
        <position position="309"/>
    </location>
    <ligand>
        <name>Zn(2+)</name>
        <dbReference type="ChEBI" id="CHEBI:29105"/>
    </ligand>
</feature>
<feature type="binding site" evidence="1">
    <location>
        <position position="312"/>
    </location>
    <ligand>
        <name>Zn(2+)</name>
        <dbReference type="ChEBI" id="CHEBI:29105"/>
    </ligand>
</feature>
<feature type="binding site" evidence="1">
    <location>
        <position position="338"/>
    </location>
    <ligand>
        <name>Zn(2+)</name>
        <dbReference type="ChEBI" id="CHEBI:29105"/>
    </ligand>
</feature>
<protein>
    <recommendedName>
        <fullName evidence="1">Queuine tRNA-ribosyltransferase</fullName>
        <ecNumber evidence="1">2.4.2.29</ecNumber>
    </recommendedName>
    <alternativeName>
        <fullName evidence="1">Guanine insertion enzyme</fullName>
    </alternativeName>
    <alternativeName>
        <fullName evidence="1">tRNA-guanine transglycosylase</fullName>
    </alternativeName>
</protein>
<name>TGT_FUSNN</name>